<reference key="1">
    <citation type="journal article" date="2007" name="J. Bacteriol.">
        <title>The genome sequence of avian pathogenic Escherichia coli strain O1:K1:H7 shares strong similarities with human extraintestinal pathogenic E. coli genomes.</title>
        <authorList>
            <person name="Johnson T.J."/>
            <person name="Kariyawasam S."/>
            <person name="Wannemuehler Y."/>
            <person name="Mangiamele P."/>
            <person name="Johnson S.J."/>
            <person name="Doetkott C."/>
            <person name="Skyberg J.A."/>
            <person name="Lynne A.M."/>
            <person name="Johnson J.R."/>
            <person name="Nolan L.K."/>
        </authorList>
    </citation>
    <scope>NUCLEOTIDE SEQUENCE [LARGE SCALE GENOMIC DNA]</scope>
</reference>
<organism>
    <name type="scientific">Escherichia coli O1:K1 / APEC</name>
    <dbReference type="NCBI Taxonomy" id="405955"/>
    <lineage>
        <taxon>Bacteria</taxon>
        <taxon>Pseudomonadati</taxon>
        <taxon>Pseudomonadota</taxon>
        <taxon>Gammaproteobacteria</taxon>
        <taxon>Enterobacterales</taxon>
        <taxon>Enterobacteriaceae</taxon>
        <taxon>Escherichia</taxon>
    </lineage>
</organism>
<protein>
    <recommendedName>
        <fullName evidence="1">Ribonuclease PH</fullName>
        <shortName evidence="1">RNase PH</shortName>
        <ecNumber evidence="1">2.7.7.56</ecNumber>
    </recommendedName>
    <alternativeName>
        <fullName evidence="1">tRNA nucleotidyltransferase</fullName>
    </alternativeName>
</protein>
<dbReference type="EC" id="2.7.7.56" evidence="1"/>
<dbReference type="EMBL" id="CP000468">
    <property type="protein sequence ID" value="ABJ03114.1"/>
    <property type="molecule type" value="Genomic_DNA"/>
</dbReference>
<dbReference type="RefSeq" id="WP_001247093.1">
    <property type="nucleotide sequence ID" value="NZ_CADILS010000011.1"/>
</dbReference>
<dbReference type="SMR" id="A1AHH4"/>
<dbReference type="GeneID" id="93778358"/>
<dbReference type="KEGG" id="ecv:APECO1_2818"/>
<dbReference type="HOGENOM" id="CLU_050858_0_0_6"/>
<dbReference type="Proteomes" id="UP000008216">
    <property type="component" value="Chromosome"/>
</dbReference>
<dbReference type="GO" id="GO:0000175">
    <property type="term" value="F:3'-5'-RNA exonuclease activity"/>
    <property type="evidence" value="ECO:0007669"/>
    <property type="project" value="UniProtKB-UniRule"/>
</dbReference>
<dbReference type="GO" id="GO:0000049">
    <property type="term" value="F:tRNA binding"/>
    <property type="evidence" value="ECO:0007669"/>
    <property type="project" value="UniProtKB-UniRule"/>
</dbReference>
<dbReference type="GO" id="GO:0009022">
    <property type="term" value="F:tRNA nucleotidyltransferase activity"/>
    <property type="evidence" value="ECO:0007669"/>
    <property type="project" value="UniProtKB-UniRule"/>
</dbReference>
<dbReference type="GO" id="GO:0016075">
    <property type="term" value="P:rRNA catabolic process"/>
    <property type="evidence" value="ECO:0007669"/>
    <property type="project" value="UniProtKB-UniRule"/>
</dbReference>
<dbReference type="GO" id="GO:0006364">
    <property type="term" value="P:rRNA processing"/>
    <property type="evidence" value="ECO:0007669"/>
    <property type="project" value="UniProtKB-KW"/>
</dbReference>
<dbReference type="GO" id="GO:0008033">
    <property type="term" value="P:tRNA processing"/>
    <property type="evidence" value="ECO:0007669"/>
    <property type="project" value="UniProtKB-UniRule"/>
</dbReference>
<dbReference type="CDD" id="cd11362">
    <property type="entry name" value="RNase_PH_bact"/>
    <property type="match status" value="1"/>
</dbReference>
<dbReference type="FunFam" id="3.30.230.70:FF:000003">
    <property type="entry name" value="Ribonuclease PH"/>
    <property type="match status" value="1"/>
</dbReference>
<dbReference type="Gene3D" id="3.30.230.70">
    <property type="entry name" value="GHMP Kinase, N-terminal domain"/>
    <property type="match status" value="1"/>
</dbReference>
<dbReference type="HAMAP" id="MF_00564">
    <property type="entry name" value="RNase_PH"/>
    <property type="match status" value="1"/>
</dbReference>
<dbReference type="InterPro" id="IPR001247">
    <property type="entry name" value="ExoRNase_PH_dom1"/>
</dbReference>
<dbReference type="InterPro" id="IPR015847">
    <property type="entry name" value="ExoRNase_PH_dom2"/>
</dbReference>
<dbReference type="InterPro" id="IPR036345">
    <property type="entry name" value="ExoRNase_PH_dom2_sf"/>
</dbReference>
<dbReference type="InterPro" id="IPR027408">
    <property type="entry name" value="PNPase/RNase_PH_dom_sf"/>
</dbReference>
<dbReference type="InterPro" id="IPR020568">
    <property type="entry name" value="Ribosomal_Su5_D2-typ_SF"/>
</dbReference>
<dbReference type="InterPro" id="IPR050080">
    <property type="entry name" value="RNase_PH"/>
</dbReference>
<dbReference type="InterPro" id="IPR002381">
    <property type="entry name" value="RNase_PH_bac-type"/>
</dbReference>
<dbReference type="InterPro" id="IPR018336">
    <property type="entry name" value="RNase_PH_CS"/>
</dbReference>
<dbReference type="NCBIfam" id="TIGR01966">
    <property type="entry name" value="RNasePH"/>
    <property type="match status" value="1"/>
</dbReference>
<dbReference type="PANTHER" id="PTHR11953">
    <property type="entry name" value="EXOSOME COMPLEX COMPONENT"/>
    <property type="match status" value="1"/>
</dbReference>
<dbReference type="PANTHER" id="PTHR11953:SF0">
    <property type="entry name" value="EXOSOME COMPLEX COMPONENT RRP41"/>
    <property type="match status" value="1"/>
</dbReference>
<dbReference type="Pfam" id="PF01138">
    <property type="entry name" value="RNase_PH"/>
    <property type="match status" value="1"/>
</dbReference>
<dbReference type="Pfam" id="PF03725">
    <property type="entry name" value="RNase_PH_C"/>
    <property type="match status" value="1"/>
</dbReference>
<dbReference type="SUPFAM" id="SSF55666">
    <property type="entry name" value="Ribonuclease PH domain 2-like"/>
    <property type="match status" value="1"/>
</dbReference>
<dbReference type="SUPFAM" id="SSF54211">
    <property type="entry name" value="Ribosomal protein S5 domain 2-like"/>
    <property type="match status" value="1"/>
</dbReference>
<dbReference type="PROSITE" id="PS01277">
    <property type="entry name" value="RIBONUCLEASE_PH"/>
    <property type="match status" value="1"/>
</dbReference>
<comment type="function">
    <text evidence="1">Phosphorolytic 3'-5' exoribonuclease that plays an important role in tRNA 3'-end maturation. Removes nucleotide residues following the 3'-CCA terminus of tRNAs; can also add nucleotides to the ends of RNA molecules by using nucleoside diphosphates as substrates, but this may not be physiologically important. Probably plays a role in initiation of 16S rRNA degradation (leading to ribosome degradation) during starvation.</text>
</comment>
<comment type="catalytic activity">
    <reaction evidence="1">
        <text>tRNA(n+1) + phosphate = tRNA(n) + a ribonucleoside 5'-diphosphate</text>
        <dbReference type="Rhea" id="RHEA:10628"/>
        <dbReference type="Rhea" id="RHEA-COMP:17343"/>
        <dbReference type="Rhea" id="RHEA-COMP:17344"/>
        <dbReference type="ChEBI" id="CHEBI:43474"/>
        <dbReference type="ChEBI" id="CHEBI:57930"/>
        <dbReference type="ChEBI" id="CHEBI:173114"/>
        <dbReference type="EC" id="2.7.7.56"/>
    </reaction>
</comment>
<comment type="subunit">
    <text evidence="1">Homohexameric ring arranged as a trimer of dimers.</text>
</comment>
<comment type="similarity">
    <text evidence="1">Belongs to the RNase PH family.</text>
</comment>
<keyword id="KW-0548">Nucleotidyltransferase</keyword>
<keyword id="KW-1185">Reference proteome</keyword>
<keyword id="KW-0694">RNA-binding</keyword>
<keyword id="KW-0698">rRNA processing</keyword>
<keyword id="KW-0808">Transferase</keyword>
<keyword id="KW-0819">tRNA processing</keyword>
<keyword id="KW-0820">tRNA-binding</keyword>
<evidence type="ECO:0000255" key="1">
    <source>
        <dbReference type="HAMAP-Rule" id="MF_00564"/>
    </source>
</evidence>
<feature type="chain" id="PRO_1000024802" description="Ribonuclease PH">
    <location>
        <begin position="1"/>
        <end position="238"/>
    </location>
</feature>
<feature type="binding site" evidence="1">
    <location>
        <position position="86"/>
    </location>
    <ligand>
        <name>phosphate</name>
        <dbReference type="ChEBI" id="CHEBI:43474"/>
        <note>substrate</note>
    </ligand>
</feature>
<feature type="binding site" evidence="1">
    <location>
        <begin position="124"/>
        <end position="126"/>
    </location>
    <ligand>
        <name>phosphate</name>
        <dbReference type="ChEBI" id="CHEBI:43474"/>
        <note>substrate</note>
    </ligand>
</feature>
<accession>A1AHH4</accession>
<sequence>MRPAGRSNNQVRPVTLTRNYTKHAEGSVLVEFGDTKVLCTASIEEGVPRFLKGQGQGWITAEYGMLPRSTHTRNAREAAKGKQGGRTMEIQRLIARALRAAVDLKALGEFTITLDCDVLQADGGTRTASITGACVALADALQKLVENGKLKTNPMKGMVAAVSVGIVNGEAVCDLEYVEDSAAETDMNVVMTEDGRIIEVQGTAEGEPFTHEELLTLLALARGGIESIVATQKAALAN</sequence>
<proteinExistence type="inferred from homology"/>
<name>RNPH_ECOK1</name>
<gene>
    <name evidence="1" type="primary">rph</name>
    <name type="ordered locus">Ecok1_36200</name>
    <name type="ORF">APECO1_2818</name>
</gene>